<accession>P32388</accession>
<accession>D6VX32</accession>
<protein>
    <recommendedName>
        <fullName evidence="5">Large ribosomal subunit protein mL61</fullName>
    </recommendedName>
    <alternativeName>
        <fullName>54S ribosomal protein MRP49, mitochondrial</fullName>
    </alternativeName>
</protein>
<evidence type="ECO:0000269" key="1">
    <source>
    </source>
</evidence>
<evidence type="ECO:0000269" key="2">
    <source>
    </source>
</evidence>
<evidence type="ECO:0000269" key="3">
    <source>
    </source>
</evidence>
<evidence type="ECO:0000269" key="4">
    <source>
    </source>
</evidence>
<evidence type="ECO:0000303" key="5">
    <source>
    </source>
</evidence>
<evidence type="ECO:0000305" key="6"/>
<evidence type="ECO:0000305" key="7">
    <source>
    </source>
</evidence>
<evidence type="ECO:0000305" key="8">
    <source>
    </source>
</evidence>
<reference key="1">
    <citation type="journal article" date="1992" name="J. Biol. Chem.">
        <title>Structure and function of MRP20 and MRP49, the nuclear genes for two proteins of the 54 S subunit of the yeast mitochondrial ribosome.</title>
        <authorList>
            <person name="Fearon K."/>
            <person name="Mason T.L."/>
        </authorList>
    </citation>
    <scope>NUCLEOTIDE SEQUENCE [GENOMIC DNA]</scope>
</reference>
<reference key="2">
    <citation type="journal article" date="1994" name="Yeast">
        <title>Sequencing and analysis of a 20.5 kb DNA segment located on the left arm of yeast chromosome XI.</title>
        <authorList>
            <person name="Vandenbol M."/>
            <person name="Bolle P.-A."/>
            <person name="Dion C."/>
            <person name="Portetelle D."/>
            <person name="Hilger F."/>
        </authorList>
    </citation>
    <scope>NUCLEOTIDE SEQUENCE [GENOMIC DNA]</scope>
    <source>
        <strain>ATCC 204508 / S288c</strain>
    </source>
</reference>
<reference key="3">
    <citation type="journal article" date="1994" name="Nature">
        <title>Complete DNA sequence of yeast chromosome XI.</title>
        <authorList>
            <person name="Dujon B."/>
            <person name="Alexandraki D."/>
            <person name="Andre B."/>
            <person name="Ansorge W."/>
            <person name="Baladron V."/>
            <person name="Ballesta J.P.G."/>
            <person name="Banrevi A."/>
            <person name="Bolle P.-A."/>
            <person name="Bolotin-Fukuhara M."/>
            <person name="Bossier P."/>
            <person name="Bou G."/>
            <person name="Boyer J."/>
            <person name="Buitrago M.J."/>
            <person name="Cheret G."/>
            <person name="Colleaux L."/>
            <person name="Daignan-Fornier B."/>
            <person name="del Rey F."/>
            <person name="Dion C."/>
            <person name="Domdey H."/>
            <person name="Duesterhoeft A."/>
            <person name="Duesterhus S."/>
            <person name="Entian K.-D."/>
            <person name="Erfle H."/>
            <person name="Esteban P.F."/>
            <person name="Feldmann H."/>
            <person name="Fernandes L."/>
            <person name="Fobo G.M."/>
            <person name="Fritz C."/>
            <person name="Fukuhara H."/>
            <person name="Gabel C."/>
            <person name="Gaillon L."/>
            <person name="Garcia-Cantalejo J.M."/>
            <person name="Garcia-Ramirez J.J."/>
            <person name="Gent M.E."/>
            <person name="Ghazvini M."/>
            <person name="Goffeau A."/>
            <person name="Gonzalez A."/>
            <person name="Grothues D."/>
            <person name="Guerreiro P."/>
            <person name="Hegemann J.H."/>
            <person name="Hewitt N."/>
            <person name="Hilger F."/>
            <person name="Hollenberg C.P."/>
            <person name="Horaitis O."/>
            <person name="Indge K.J."/>
            <person name="Jacquier A."/>
            <person name="James C.M."/>
            <person name="Jauniaux J.-C."/>
            <person name="Jimenez A."/>
            <person name="Keuchel H."/>
            <person name="Kirchrath L."/>
            <person name="Kleine K."/>
            <person name="Koetter P."/>
            <person name="Legrain P."/>
            <person name="Liebl S."/>
            <person name="Louis E.J."/>
            <person name="Maia e Silva A."/>
            <person name="Marck C."/>
            <person name="Monnier A.-L."/>
            <person name="Moestl D."/>
            <person name="Mueller S."/>
            <person name="Obermaier B."/>
            <person name="Oliver S.G."/>
            <person name="Pallier C."/>
            <person name="Pascolo S."/>
            <person name="Pfeiffer F."/>
            <person name="Philippsen P."/>
            <person name="Planta R.J."/>
            <person name="Pohl F.M."/>
            <person name="Pohl T.M."/>
            <person name="Poehlmann R."/>
            <person name="Portetelle D."/>
            <person name="Purnelle B."/>
            <person name="Puzos V."/>
            <person name="Ramezani Rad M."/>
            <person name="Rasmussen S.W."/>
            <person name="Remacha M.A."/>
            <person name="Revuelta J.L."/>
            <person name="Richard G.-F."/>
            <person name="Rieger M."/>
            <person name="Rodrigues-Pousada C."/>
            <person name="Rose M."/>
            <person name="Rupp T."/>
            <person name="Santos M.A."/>
            <person name="Schwager C."/>
            <person name="Sensen C."/>
            <person name="Skala J."/>
            <person name="Soares H."/>
            <person name="Sor F."/>
            <person name="Stegemann J."/>
            <person name="Tettelin H."/>
            <person name="Thierry A."/>
            <person name="Tzermia M."/>
            <person name="Urrestarazu L.A."/>
            <person name="van Dyck L."/>
            <person name="van Vliet-Reedijk J.C."/>
            <person name="Valens M."/>
            <person name="Vandenbol M."/>
            <person name="Vilela C."/>
            <person name="Vissers S."/>
            <person name="von Wettstein D."/>
            <person name="Voss H."/>
            <person name="Wiemann S."/>
            <person name="Xu G."/>
            <person name="Zimmermann J."/>
            <person name="Haasemann M."/>
            <person name="Becker I."/>
            <person name="Mewes H.-W."/>
        </authorList>
    </citation>
    <scope>NUCLEOTIDE SEQUENCE [LARGE SCALE GENOMIC DNA]</scope>
    <source>
        <strain>ATCC 204508 / S288c</strain>
    </source>
</reference>
<reference key="4">
    <citation type="journal article" date="2014" name="G3 (Bethesda)">
        <title>The reference genome sequence of Saccharomyces cerevisiae: Then and now.</title>
        <authorList>
            <person name="Engel S.R."/>
            <person name="Dietrich F.S."/>
            <person name="Fisk D.G."/>
            <person name="Binkley G."/>
            <person name="Balakrishnan R."/>
            <person name="Costanzo M.C."/>
            <person name="Dwight S.S."/>
            <person name="Hitz B.C."/>
            <person name="Karra K."/>
            <person name="Nash R.S."/>
            <person name="Weng S."/>
            <person name="Wong E.D."/>
            <person name="Lloyd P."/>
            <person name="Skrzypek M.S."/>
            <person name="Miyasato S.R."/>
            <person name="Simison M."/>
            <person name="Cherry J.M."/>
        </authorList>
    </citation>
    <scope>GENOME REANNOTATION</scope>
    <source>
        <strain>ATCC 204508 / S288c</strain>
    </source>
</reference>
<reference key="5">
    <citation type="journal article" date="2007" name="Genome Res.">
        <title>Approaching a complete repository of sequence-verified protein-encoding clones for Saccharomyces cerevisiae.</title>
        <authorList>
            <person name="Hu Y."/>
            <person name="Rolfs A."/>
            <person name="Bhullar B."/>
            <person name="Murthy T.V.S."/>
            <person name="Zhu C."/>
            <person name="Berger M.F."/>
            <person name="Camargo A.A."/>
            <person name="Kelley F."/>
            <person name="McCarron S."/>
            <person name="Jepson D."/>
            <person name="Richardson A."/>
            <person name="Raphael J."/>
            <person name="Moreira D."/>
            <person name="Taycher E."/>
            <person name="Zuo D."/>
            <person name="Mohr S."/>
            <person name="Kane M.F."/>
            <person name="Williamson J."/>
            <person name="Simpson A.J.G."/>
            <person name="Bulyk M.L."/>
            <person name="Harlow E."/>
            <person name="Marsischky G."/>
            <person name="Kolodner R.D."/>
            <person name="LaBaer J."/>
        </authorList>
    </citation>
    <scope>NUCLEOTIDE SEQUENCE [GENOMIC DNA]</scope>
    <source>
        <strain>ATCC 204508 / S288c</strain>
    </source>
</reference>
<reference key="6">
    <citation type="journal article" date="2003" name="Nature">
        <title>Global analysis of protein localization in budding yeast.</title>
        <authorList>
            <person name="Huh W.-K."/>
            <person name="Falvo J.V."/>
            <person name="Gerke L.C."/>
            <person name="Carroll A.S."/>
            <person name="Howson R.W."/>
            <person name="Weissman J.S."/>
            <person name="O'Shea E.K."/>
        </authorList>
    </citation>
    <scope>SUBCELLULAR LOCATION [LARGE SCALE ANALYSIS]</scope>
</reference>
<reference key="7">
    <citation type="journal article" date="2003" name="Proc. Natl. Acad. Sci. U.S.A.">
        <title>The proteome of Saccharomyces cerevisiae mitochondria.</title>
        <authorList>
            <person name="Sickmann A."/>
            <person name="Reinders J."/>
            <person name="Wagner Y."/>
            <person name="Joppich C."/>
            <person name="Zahedi R.P."/>
            <person name="Meyer H.E."/>
            <person name="Schoenfisch B."/>
            <person name="Perschil I."/>
            <person name="Chacinska A."/>
            <person name="Guiard B."/>
            <person name="Rehling P."/>
            <person name="Pfanner N."/>
            <person name="Meisinger C."/>
        </authorList>
    </citation>
    <scope>SUBCELLULAR LOCATION [LARGE SCALE ANALYSIS]</scope>
    <source>
        <strain>ATCC 76625 / YPH499</strain>
    </source>
</reference>
<reference key="8">
    <citation type="journal article" date="2014" name="Science">
        <title>Structure of the yeast mitochondrial large ribosomal subunit.</title>
        <authorList>
            <person name="Amunts A."/>
            <person name="Brown A."/>
            <person name="Bai X.C."/>
            <person name="Llacer J.L."/>
            <person name="Hussain T."/>
            <person name="Emsley P."/>
            <person name="Long F."/>
            <person name="Murshudov G."/>
            <person name="Scheres S.H."/>
            <person name="Ramakrishnan V."/>
        </authorList>
    </citation>
    <scope>SUBUNIT</scope>
    <scope>IDENTIFICATION BY MASS SPECTROMETRY</scope>
</reference>
<reference key="9">
    <citation type="journal article" date="2015" name="Nat. Commun.">
        <title>Organization of the mitochondrial translation machinery studied in situ by cryoelectron tomography.</title>
        <authorList>
            <person name="Pfeffer S."/>
            <person name="Woellhaf M.W."/>
            <person name="Herrmann J.M."/>
            <person name="Forster F."/>
        </authorList>
    </citation>
    <scope>SUBCELLULAR LOCATION</scope>
</reference>
<feature type="chain" id="PRO_0000030583" description="Large ribosomal subunit protein mL61">
    <location>
        <begin position="1"/>
        <end position="137"/>
    </location>
</feature>
<keyword id="KW-0496">Mitochondrion</keyword>
<keyword id="KW-1185">Reference proteome</keyword>
<keyword id="KW-0687">Ribonucleoprotein</keyword>
<keyword id="KW-0689">Ribosomal protein</keyword>
<gene>
    <name type="primary">MRP49</name>
    <name type="ordered locus">YKL167C</name>
    <name type="ORF">YKL631</name>
</gene>
<proteinExistence type="evidence at protein level"/>
<dbReference type="EMBL" id="M81697">
    <property type="protein sequence ID" value="AAA34792.1"/>
    <property type="molecule type" value="Genomic_DNA"/>
</dbReference>
<dbReference type="EMBL" id="Z26878">
    <property type="protein sequence ID" value="CAA81520.1"/>
    <property type="molecule type" value="Genomic_DNA"/>
</dbReference>
<dbReference type="EMBL" id="Z28167">
    <property type="protein sequence ID" value="CAA82009.1"/>
    <property type="molecule type" value="Genomic_DNA"/>
</dbReference>
<dbReference type="EMBL" id="AY692991">
    <property type="protein sequence ID" value="AAT93010.1"/>
    <property type="molecule type" value="Genomic_DNA"/>
</dbReference>
<dbReference type="EMBL" id="BK006944">
    <property type="protein sequence ID" value="DAA08998.1"/>
    <property type="molecule type" value="Genomic_DNA"/>
</dbReference>
<dbReference type="PIR" id="A42105">
    <property type="entry name" value="A42105"/>
</dbReference>
<dbReference type="RefSeq" id="NP_012754.1">
    <property type="nucleotide sequence ID" value="NM_001179733.1"/>
</dbReference>
<dbReference type="SMR" id="P32388"/>
<dbReference type="BioGRID" id="33970">
    <property type="interactions" value="272"/>
</dbReference>
<dbReference type="ComplexPortal" id="CPX-1602">
    <property type="entry name" value="54S mitochondrial large ribosomal subunit"/>
</dbReference>
<dbReference type="DIP" id="DIP-6767N"/>
<dbReference type="FunCoup" id="P32388">
    <property type="interactions" value="139"/>
</dbReference>
<dbReference type="IntAct" id="P32388">
    <property type="interactions" value="54"/>
</dbReference>
<dbReference type="MINT" id="P32388"/>
<dbReference type="STRING" id="4932.YKL167C"/>
<dbReference type="PaxDb" id="4932-YKL167C"/>
<dbReference type="PeptideAtlas" id="P32388"/>
<dbReference type="TopDownProteomics" id="P32388"/>
<dbReference type="EnsemblFungi" id="YKL167C_mRNA">
    <property type="protein sequence ID" value="YKL167C"/>
    <property type="gene ID" value="YKL167C"/>
</dbReference>
<dbReference type="GeneID" id="853687"/>
<dbReference type="KEGG" id="sce:YKL167C"/>
<dbReference type="AGR" id="SGD:S000001650"/>
<dbReference type="SGD" id="S000001650">
    <property type="gene designation" value="MRP49"/>
</dbReference>
<dbReference type="VEuPathDB" id="FungiDB:YKL167C"/>
<dbReference type="eggNOG" id="ENOG502S1AY">
    <property type="taxonomic scope" value="Eukaryota"/>
</dbReference>
<dbReference type="HOGENOM" id="CLU_141769_0_0_1"/>
<dbReference type="InParanoid" id="P32388"/>
<dbReference type="OMA" id="QNHNGHM"/>
<dbReference type="OrthoDB" id="1696305at2759"/>
<dbReference type="BioCyc" id="YEAST:G3O-31935-MONOMER"/>
<dbReference type="BioGRID-ORCS" id="853687">
    <property type="hits" value="3 hits in 10 CRISPR screens"/>
</dbReference>
<dbReference type="PRO" id="PR:P32388"/>
<dbReference type="Proteomes" id="UP000002311">
    <property type="component" value="Chromosome XI"/>
</dbReference>
<dbReference type="RNAct" id="P32388">
    <property type="molecule type" value="protein"/>
</dbReference>
<dbReference type="GO" id="GO:0005743">
    <property type="term" value="C:mitochondrial inner membrane"/>
    <property type="evidence" value="ECO:0000303"/>
    <property type="project" value="ComplexPortal"/>
</dbReference>
<dbReference type="GO" id="GO:0005762">
    <property type="term" value="C:mitochondrial large ribosomal subunit"/>
    <property type="evidence" value="ECO:0000314"/>
    <property type="project" value="SGD"/>
</dbReference>
<dbReference type="GO" id="GO:0005739">
    <property type="term" value="C:mitochondrion"/>
    <property type="evidence" value="ECO:0007005"/>
    <property type="project" value="SGD"/>
</dbReference>
<dbReference type="GO" id="GO:0003735">
    <property type="term" value="F:structural constituent of ribosome"/>
    <property type="evidence" value="ECO:0000314"/>
    <property type="project" value="SGD"/>
</dbReference>
<dbReference type="GO" id="GO:0032543">
    <property type="term" value="P:mitochondrial translation"/>
    <property type="evidence" value="ECO:0000315"/>
    <property type="project" value="SGD"/>
</dbReference>
<dbReference type="InterPro" id="IPR007741">
    <property type="entry name" value="Ribosomal_mL43/mS25/NADH_DH"/>
</dbReference>
<dbReference type="InterPro" id="IPR040049">
    <property type="entry name" value="Ribosomal_mS25/mL61"/>
</dbReference>
<dbReference type="PANTHER" id="PTHR13274">
    <property type="entry name" value="MITOCHONDRIAL RIBOSOMAL PROTEIN S25"/>
    <property type="match status" value="1"/>
</dbReference>
<dbReference type="PANTHER" id="PTHR13274:SF2">
    <property type="entry name" value="SMALL RIBOSOMAL SUBUNIT PROTEIN MS25"/>
    <property type="match status" value="1"/>
</dbReference>
<dbReference type="Pfam" id="PF05047">
    <property type="entry name" value="L51_S25_CI-B8"/>
    <property type="match status" value="1"/>
</dbReference>
<dbReference type="SMART" id="SM00916">
    <property type="entry name" value="L51_S25_CI-B8"/>
    <property type="match status" value="1"/>
</dbReference>
<name>RM49_YEAST</name>
<sequence length="137" mass="16021">MSKVAQQLKFLNKISATTRLPQILVDPKKYSGLRLTFQTKNHNGHMGARVFWHNYLPTLQFYNPRMKFDVIRIKNEDKQKSVPCKLEILSHEGSVVETIDMRNKMHEDIMKDLLDKIEHVPLPENEIIRVGPQESII</sequence>
<organism>
    <name type="scientific">Saccharomyces cerevisiae (strain ATCC 204508 / S288c)</name>
    <name type="common">Baker's yeast</name>
    <dbReference type="NCBI Taxonomy" id="559292"/>
    <lineage>
        <taxon>Eukaryota</taxon>
        <taxon>Fungi</taxon>
        <taxon>Dikarya</taxon>
        <taxon>Ascomycota</taxon>
        <taxon>Saccharomycotina</taxon>
        <taxon>Saccharomycetes</taxon>
        <taxon>Saccharomycetales</taxon>
        <taxon>Saccharomycetaceae</taxon>
        <taxon>Saccharomyces</taxon>
    </lineage>
</organism>
<comment type="function">
    <text evidence="7 8">Component of the mitochondrial ribosome (mitoribosome), a dedicated translation machinery responsible for the synthesis of mitochondrial genome-encoded proteins, including at least some of the essential transmembrane subunits of the mitochondrial respiratory chain. The mitoribosomes are attached to the mitochondrial inner membrane and translation products are cotranslationally integrated into the membrane (PubMed:24675956, PubMed:25609543). mL61 is not essential in cells grown at 30 degrees Celsius but is required for mitochondrial translation in cells grown at 18 degrees Celsius.</text>
</comment>
<comment type="subunit">
    <text evidence="3">Component of the mitochondrial large ribosomal subunit (mt-LSU). Mature yeast 74S mitochondrial ribosomes consist of a small (37S) and a large (54S) subunit. The 37S small subunit contains a 15S ribosomal RNA (15S mt-rRNA) and 34 different proteins. The 54S large subunit contains a 21S rRNA (21S mt-rRNA) and 46 different proteins.</text>
</comment>
<comment type="subcellular location">
    <subcellularLocation>
        <location evidence="1 2">Mitochondrion</location>
    </subcellularLocation>
    <text evidence="4">Mitoribosomes are tethered to the mitochondrial inner membrane and spatially aligned with the membrane insertion machinery through two distinct membrane contact sites, formed by the 21S rRNA expansion segment 96-ES1 and the inner membrane protein MBA1.</text>
</comment>
<comment type="similarity">
    <text evidence="6">Belongs to the mitochondrion-specific ribosomal protein mL61 family.</text>
</comment>